<keyword id="KW-0025">Alternative splicing</keyword>
<keyword id="KW-0225">Disease variant</keyword>
<keyword id="KW-0256">Endoplasmic reticulum</keyword>
<keyword id="KW-0325">Glycoprotein</keyword>
<keyword id="KW-0337">GPI-anchor biosynthesis</keyword>
<keyword id="KW-0991">Intellectual disability</keyword>
<keyword id="KW-0472">Membrane</keyword>
<keyword id="KW-1267">Proteomics identification</keyword>
<keyword id="KW-1185">Reference proteome</keyword>
<keyword id="KW-0808">Transferase</keyword>
<keyword id="KW-0812">Transmembrane</keyword>
<keyword id="KW-1133">Transmembrane helix</keyword>
<reference key="1">
    <citation type="journal article" date="2005" name="J. Biol. Chem.">
        <title>GPI7 is the second partner of PIG-F and involved in modification of glycosylphosphatidylinositol.</title>
        <authorList>
            <person name="Shishioh N."/>
            <person name="Hong Y."/>
            <person name="Ohishi K."/>
            <person name="Ashida H."/>
            <person name="Maeda Y."/>
            <person name="Kinoshita T."/>
        </authorList>
    </citation>
    <scope>NUCLEOTIDE SEQUENCE [MRNA] (ISOFORM 1)</scope>
    <scope>FUNCTION</scope>
    <scope>CATALYTIC ACTIVITY</scope>
    <scope>PATHWAY</scope>
    <scope>SUBCELLULAR LOCATION</scope>
    <scope>INTERACTION WITH PIGF</scope>
</reference>
<reference key="2">
    <citation type="journal article" date="2003" name="Genome Res.">
        <title>The secreted protein discovery initiative (SPDI), a large-scale effort to identify novel human secreted and transmembrane proteins: a bioinformatics assessment.</title>
        <authorList>
            <person name="Clark H.F."/>
            <person name="Gurney A.L."/>
            <person name="Abaya E."/>
            <person name="Baker K."/>
            <person name="Baldwin D.T."/>
            <person name="Brush J."/>
            <person name="Chen J."/>
            <person name="Chow B."/>
            <person name="Chui C."/>
            <person name="Crowley C."/>
            <person name="Currell B."/>
            <person name="Deuel B."/>
            <person name="Dowd P."/>
            <person name="Eaton D."/>
            <person name="Foster J.S."/>
            <person name="Grimaldi C."/>
            <person name="Gu Q."/>
            <person name="Hass P.E."/>
            <person name="Heldens S."/>
            <person name="Huang A."/>
            <person name="Kim H.S."/>
            <person name="Klimowski L."/>
            <person name="Jin Y."/>
            <person name="Johnson S."/>
            <person name="Lee J."/>
            <person name="Lewis L."/>
            <person name="Liao D."/>
            <person name="Mark M.R."/>
            <person name="Robbie E."/>
            <person name="Sanchez C."/>
            <person name="Schoenfeld J."/>
            <person name="Seshagiri S."/>
            <person name="Simmons L."/>
            <person name="Singh J."/>
            <person name="Smith V."/>
            <person name="Stinson J."/>
            <person name="Vagts A."/>
            <person name="Vandlen R.L."/>
            <person name="Watanabe C."/>
            <person name="Wieand D."/>
            <person name="Woods K."/>
            <person name="Xie M.-H."/>
            <person name="Yansura D.G."/>
            <person name="Yi S."/>
            <person name="Yu G."/>
            <person name="Yuan J."/>
            <person name="Zhang M."/>
            <person name="Zhang Z."/>
            <person name="Goddard A.D."/>
            <person name="Wood W.I."/>
            <person name="Godowski P.J."/>
            <person name="Gray A.M."/>
        </authorList>
    </citation>
    <scope>NUCLEOTIDE SEQUENCE [LARGE SCALE MRNA] (ISOFORM 4)</scope>
</reference>
<reference key="3">
    <citation type="journal article" date="2005" name="DNA Res.">
        <title>Signal sequence and keyword trap in silico for selection of full-length human cDNAs encoding secretion or membrane proteins from oligo-capped cDNA libraries.</title>
        <authorList>
            <person name="Otsuki T."/>
            <person name="Ota T."/>
            <person name="Nishikawa T."/>
            <person name="Hayashi K."/>
            <person name="Suzuki Y."/>
            <person name="Yamamoto J."/>
            <person name="Wakamatsu A."/>
            <person name="Kimura K."/>
            <person name="Sakamoto K."/>
            <person name="Hatano N."/>
            <person name="Kawai Y."/>
            <person name="Ishii S."/>
            <person name="Saito K."/>
            <person name="Kojima S."/>
            <person name="Sugiyama T."/>
            <person name="Ono T."/>
            <person name="Okano K."/>
            <person name="Yoshikawa Y."/>
            <person name="Aotsuka S."/>
            <person name="Sasaki N."/>
            <person name="Hattori A."/>
            <person name="Okumura K."/>
            <person name="Nagai K."/>
            <person name="Sugano S."/>
            <person name="Isogai T."/>
        </authorList>
    </citation>
    <scope>NUCLEOTIDE SEQUENCE [LARGE SCALE MRNA] (ISOFORM 2)</scope>
</reference>
<reference key="4">
    <citation type="journal article" date="2004" name="Nat. Genet.">
        <title>Complete sequencing and characterization of 21,243 full-length human cDNAs.</title>
        <authorList>
            <person name="Ota T."/>
            <person name="Suzuki Y."/>
            <person name="Nishikawa T."/>
            <person name="Otsuki T."/>
            <person name="Sugiyama T."/>
            <person name="Irie R."/>
            <person name="Wakamatsu A."/>
            <person name="Hayashi K."/>
            <person name="Sato H."/>
            <person name="Nagai K."/>
            <person name="Kimura K."/>
            <person name="Makita H."/>
            <person name="Sekine M."/>
            <person name="Obayashi M."/>
            <person name="Nishi T."/>
            <person name="Shibahara T."/>
            <person name="Tanaka T."/>
            <person name="Ishii S."/>
            <person name="Yamamoto J."/>
            <person name="Saito K."/>
            <person name="Kawai Y."/>
            <person name="Isono Y."/>
            <person name="Nakamura Y."/>
            <person name="Nagahari K."/>
            <person name="Murakami K."/>
            <person name="Yasuda T."/>
            <person name="Iwayanagi T."/>
            <person name="Wagatsuma M."/>
            <person name="Shiratori A."/>
            <person name="Sudo H."/>
            <person name="Hosoiri T."/>
            <person name="Kaku Y."/>
            <person name="Kodaira H."/>
            <person name="Kondo H."/>
            <person name="Sugawara M."/>
            <person name="Takahashi M."/>
            <person name="Kanda K."/>
            <person name="Yokoi T."/>
            <person name="Furuya T."/>
            <person name="Kikkawa E."/>
            <person name="Omura Y."/>
            <person name="Abe K."/>
            <person name="Kamihara K."/>
            <person name="Katsuta N."/>
            <person name="Sato K."/>
            <person name="Tanikawa M."/>
            <person name="Yamazaki M."/>
            <person name="Ninomiya K."/>
            <person name="Ishibashi T."/>
            <person name="Yamashita H."/>
            <person name="Murakawa K."/>
            <person name="Fujimori K."/>
            <person name="Tanai H."/>
            <person name="Kimata M."/>
            <person name="Watanabe M."/>
            <person name="Hiraoka S."/>
            <person name="Chiba Y."/>
            <person name="Ishida S."/>
            <person name="Ono Y."/>
            <person name="Takiguchi S."/>
            <person name="Watanabe S."/>
            <person name="Yosida M."/>
            <person name="Hotuta T."/>
            <person name="Kusano J."/>
            <person name="Kanehori K."/>
            <person name="Takahashi-Fujii A."/>
            <person name="Hara H."/>
            <person name="Tanase T.-O."/>
            <person name="Nomura Y."/>
            <person name="Togiya S."/>
            <person name="Komai F."/>
            <person name="Hara R."/>
            <person name="Takeuchi K."/>
            <person name="Arita M."/>
            <person name="Imose N."/>
            <person name="Musashino K."/>
            <person name="Yuuki H."/>
            <person name="Oshima A."/>
            <person name="Sasaki N."/>
            <person name="Aotsuka S."/>
            <person name="Yoshikawa Y."/>
            <person name="Matsunawa H."/>
            <person name="Ichihara T."/>
            <person name="Shiohata N."/>
            <person name="Sano S."/>
            <person name="Moriya S."/>
            <person name="Momiyama H."/>
            <person name="Satoh N."/>
            <person name="Takami S."/>
            <person name="Terashima Y."/>
            <person name="Suzuki O."/>
            <person name="Nakagawa S."/>
            <person name="Senoh A."/>
            <person name="Mizoguchi H."/>
            <person name="Goto Y."/>
            <person name="Shimizu F."/>
            <person name="Wakebe H."/>
            <person name="Hishigaki H."/>
            <person name="Watanabe T."/>
            <person name="Sugiyama A."/>
            <person name="Takemoto M."/>
            <person name="Kawakami B."/>
            <person name="Yamazaki M."/>
            <person name="Watanabe K."/>
            <person name="Kumagai A."/>
            <person name="Itakura S."/>
            <person name="Fukuzumi Y."/>
            <person name="Fujimori Y."/>
            <person name="Komiyama M."/>
            <person name="Tashiro H."/>
            <person name="Tanigami A."/>
            <person name="Fujiwara T."/>
            <person name="Ono T."/>
            <person name="Yamada K."/>
            <person name="Fujii Y."/>
            <person name="Ozaki K."/>
            <person name="Hirao M."/>
            <person name="Ohmori Y."/>
            <person name="Kawabata A."/>
            <person name="Hikiji T."/>
            <person name="Kobatake N."/>
            <person name="Inagaki H."/>
            <person name="Ikema Y."/>
            <person name="Okamoto S."/>
            <person name="Okitani R."/>
            <person name="Kawakami T."/>
            <person name="Noguchi S."/>
            <person name="Itoh T."/>
            <person name="Shigeta K."/>
            <person name="Senba T."/>
            <person name="Matsumura K."/>
            <person name="Nakajima Y."/>
            <person name="Mizuno T."/>
            <person name="Morinaga M."/>
            <person name="Sasaki M."/>
            <person name="Togashi T."/>
            <person name="Oyama M."/>
            <person name="Hata H."/>
            <person name="Watanabe M."/>
            <person name="Komatsu T."/>
            <person name="Mizushima-Sugano J."/>
            <person name="Satoh T."/>
            <person name="Shirai Y."/>
            <person name="Takahashi Y."/>
            <person name="Nakagawa K."/>
            <person name="Okumura K."/>
            <person name="Nagase T."/>
            <person name="Nomura N."/>
            <person name="Kikuchi H."/>
            <person name="Masuho Y."/>
            <person name="Yamashita R."/>
            <person name="Nakai K."/>
            <person name="Yada T."/>
            <person name="Nakamura Y."/>
            <person name="Ohara O."/>
            <person name="Isogai T."/>
            <person name="Sugano S."/>
        </authorList>
    </citation>
    <scope>NUCLEOTIDE SEQUENCE [LARGE SCALE MRNA] (ISOFORMS 5 AND 6)</scope>
    <scope>NUCLEOTIDE SEQUENCE [LARGE SCALE MRNA] OF 367-983 (ISOFORM 1)</scope>
    <scope>VARIANT ILE-699</scope>
    <source>
        <tissue>Cervix</tissue>
        <tissue>Colon mucosa</tissue>
        <tissue>Teratocarcinoma</tissue>
        <tissue>Thalamus</tissue>
    </source>
</reference>
<reference key="5">
    <citation type="journal article" date="2005" name="Nature">
        <title>Generation and annotation of the DNA sequences of human chromosomes 2 and 4.</title>
        <authorList>
            <person name="Hillier L.W."/>
            <person name="Graves T.A."/>
            <person name="Fulton R.S."/>
            <person name="Fulton L.A."/>
            <person name="Pepin K.H."/>
            <person name="Minx P."/>
            <person name="Wagner-McPherson C."/>
            <person name="Layman D."/>
            <person name="Wylie K."/>
            <person name="Sekhon M."/>
            <person name="Becker M.C."/>
            <person name="Fewell G.A."/>
            <person name="Delehaunty K.D."/>
            <person name="Miner T.L."/>
            <person name="Nash W.E."/>
            <person name="Kremitzki C."/>
            <person name="Oddy L."/>
            <person name="Du H."/>
            <person name="Sun H."/>
            <person name="Bradshaw-Cordum H."/>
            <person name="Ali J."/>
            <person name="Carter J."/>
            <person name="Cordes M."/>
            <person name="Harris A."/>
            <person name="Isak A."/>
            <person name="van Brunt A."/>
            <person name="Nguyen C."/>
            <person name="Du F."/>
            <person name="Courtney L."/>
            <person name="Kalicki J."/>
            <person name="Ozersky P."/>
            <person name="Abbott S."/>
            <person name="Armstrong J."/>
            <person name="Belter E.A."/>
            <person name="Caruso L."/>
            <person name="Cedroni M."/>
            <person name="Cotton M."/>
            <person name="Davidson T."/>
            <person name="Desai A."/>
            <person name="Elliott G."/>
            <person name="Erb T."/>
            <person name="Fronick C."/>
            <person name="Gaige T."/>
            <person name="Haakenson W."/>
            <person name="Haglund K."/>
            <person name="Holmes A."/>
            <person name="Harkins R."/>
            <person name="Kim K."/>
            <person name="Kruchowski S.S."/>
            <person name="Strong C.M."/>
            <person name="Grewal N."/>
            <person name="Goyea E."/>
            <person name="Hou S."/>
            <person name="Levy A."/>
            <person name="Martinka S."/>
            <person name="Mead K."/>
            <person name="McLellan M.D."/>
            <person name="Meyer R."/>
            <person name="Randall-Maher J."/>
            <person name="Tomlinson C."/>
            <person name="Dauphin-Kohlberg S."/>
            <person name="Kozlowicz-Reilly A."/>
            <person name="Shah N."/>
            <person name="Swearengen-Shahid S."/>
            <person name="Snider J."/>
            <person name="Strong J.T."/>
            <person name="Thompson J."/>
            <person name="Yoakum M."/>
            <person name="Leonard S."/>
            <person name="Pearman C."/>
            <person name="Trani L."/>
            <person name="Radionenko M."/>
            <person name="Waligorski J.E."/>
            <person name="Wang C."/>
            <person name="Rock S.M."/>
            <person name="Tin-Wollam A.-M."/>
            <person name="Maupin R."/>
            <person name="Latreille P."/>
            <person name="Wendl M.C."/>
            <person name="Yang S.-P."/>
            <person name="Pohl C."/>
            <person name="Wallis J.W."/>
            <person name="Spieth J."/>
            <person name="Bieri T.A."/>
            <person name="Berkowicz N."/>
            <person name="Nelson J.O."/>
            <person name="Osborne J."/>
            <person name="Ding L."/>
            <person name="Meyer R."/>
            <person name="Sabo A."/>
            <person name="Shotland Y."/>
            <person name="Sinha P."/>
            <person name="Wohldmann P.E."/>
            <person name="Cook L.L."/>
            <person name="Hickenbotham M.T."/>
            <person name="Eldred J."/>
            <person name="Williams D."/>
            <person name="Jones T.A."/>
            <person name="She X."/>
            <person name="Ciccarelli F.D."/>
            <person name="Izaurralde E."/>
            <person name="Taylor J."/>
            <person name="Schmutz J."/>
            <person name="Myers R.M."/>
            <person name="Cox D.R."/>
            <person name="Huang X."/>
            <person name="McPherson J.D."/>
            <person name="Mardis E.R."/>
            <person name="Clifton S.W."/>
            <person name="Warren W.C."/>
            <person name="Chinwalla A.T."/>
            <person name="Eddy S.R."/>
            <person name="Marra M.A."/>
            <person name="Ovcharenko I."/>
            <person name="Furey T.S."/>
            <person name="Miller W."/>
            <person name="Eichler E.E."/>
            <person name="Bork P."/>
            <person name="Suyama M."/>
            <person name="Torrents D."/>
            <person name="Waterston R.H."/>
            <person name="Wilson R.K."/>
        </authorList>
    </citation>
    <scope>NUCLEOTIDE SEQUENCE [LARGE SCALE GENOMIC DNA]</scope>
</reference>
<reference key="6">
    <citation type="journal article" date="2004" name="Genome Res.">
        <title>The status, quality, and expansion of the NIH full-length cDNA project: the Mammalian Gene Collection (MGC).</title>
        <authorList>
            <consortium name="The MGC Project Team"/>
        </authorList>
    </citation>
    <scope>NUCLEOTIDE SEQUENCE [LARGE SCALE MRNA] (ISOFORM 3)</scope>
    <scope>VARIANTS HIS-458; ARG-610 AND ILE-699</scope>
    <source>
        <tissue>Lung</tissue>
        <tissue>Placenta</tissue>
    </source>
</reference>
<reference key="7">
    <citation type="journal article" date="2016" name="Am. J. Hum. Genet.">
        <title>Pathogenic variants in PIGG cause intellectual disability with seizures and hypotonia.</title>
        <authorList>
            <person name="Makrythanasis P."/>
            <person name="Kato M."/>
            <person name="Zaki M.S."/>
            <person name="Saitsu H."/>
            <person name="Nakamura K."/>
            <person name="Santoni F.A."/>
            <person name="Miyatake S."/>
            <person name="Nakashima M."/>
            <person name="Issa M.Y."/>
            <person name="Guipponi M."/>
            <person name="Letourneau A."/>
            <person name="Logan C.V."/>
            <person name="Roberts N."/>
            <person name="Parry D.A."/>
            <person name="Johnson C.A."/>
            <person name="Matsumoto N."/>
            <person name="Hamamy H."/>
            <person name="Sheridan E."/>
            <person name="Kinoshita T."/>
            <person name="Antonarakis S.E."/>
            <person name="Murakami Y."/>
        </authorList>
    </citation>
    <scope>INVOLVEMENT IN NEDHSCA</scope>
    <scope>VARIANTS NEDHSCA 310-GLN--SER-983 DEL AND CYS-669</scope>
    <scope>CHARACTERIZATION OF VARIANTS NEDHSCA 310-GLN--SER-983 DEL AND CYS-669</scope>
    <scope>FUNCTION</scope>
    <scope>CATALYTIC ACTIVITY</scope>
</reference>
<reference key="8">
    <citation type="journal article" date="2017" name="Hum. Mutat.">
        <title>Reduced cell surface levels of GPI-linked markers in a new case with PIGG loss of function.</title>
        <authorList>
            <person name="Zhao J.J."/>
            <person name="Halvardson J."/>
            <person name="Knaus A."/>
            <person name="Georgii-Hemming P."/>
            <person name="Baeck P."/>
            <person name="Krawitz P.M."/>
            <person name="Thuresson A.C."/>
            <person name="Feuk L."/>
        </authorList>
    </citation>
    <scope>VARIANT NEDHSCA 547-TRP--SER-983 DEL</scope>
    <scope>CHARACTERIZATION OF VARIANT NEDHSCA 547-TRP--SER-983 DEL</scope>
</reference>
<reference key="9">
    <citation type="journal article" date="2021" name="Blood">
        <title>Inherited glycosylphosphatidylinositol defects cause the rare Emm-negative blood phenotype and developmental disorders.</title>
        <authorList>
            <person name="Duval R."/>
            <person name="Nicolas G."/>
            <person name="Willemetz A."/>
            <person name="Murakami Y."/>
            <person name="Mikdar M."/>
            <person name="Vrignaud C."/>
            <person name="Megahed H."/>
            <person name="Cartron J.P."/>
            <person name="Masson C."/>
            <person name="Wehbi S."/>
            <person name="Koehl B."/>
            <person name="Hully M."/>
            <person name="Siquier K."/>
            <person name="Chemlay N."/>
            <person name="Rotig A."/>
            <person name="Lyonnet S."/>
            <person name="Colin Y."/>
            <person name="Barcia G."/>
            <person name="Cantagrel V."/>
            <person name="Le Van Kim C."/>
            <person name="Hermine O."/>
            <person name="Kinoshita T."/>
            <person name="Peyrard T."/>
            <person name="Azouzi S."/>
        </authorList>
    </citation>
    <scope>VARIANT NEDHSCA TYR-214</scope>
    <scope>CHARACTERIZATION OF VARIANT NEDHSCA TYR-214</scope>
    <scope>POLYMORPHISM</scope>
    <scope>FUNCTION</scope>
</reference>
<reference key="10">
    <citation type="journal article" date="2021" name="Genet. Med.">
        <title>PIGG variant pathogenicity assessment reveals characteristic features within 19 families.</title>
        <authorList>
            <person name="Tremblay-Laganiere C."/>
            <person name="Maroofian R."/>
            <person name="Nguyen T.T.M."/>
            <person name="Karimiani E.G."/>
            <person name="Kirmani S."/>
            <person name="Akbar F."/>
            <person name="Ibrahim S."/>
            <person name="Afroze B."/>
            <person name="Doosti M."/>
            <person name="Ashrafzadeh F."/>
            <person name="Babaei M."/>
            <person name="Efthymiou S."/>
            <person name="Christoforou M."/>
            <person name="Sultan T."/>
            <person name="Ladda R.L."/>
            <person name="McLaughlin H.M."/>
            <person name="Truty R."/>
            <person name="Mahida S."/>
            <person name="Cohen J.S."/>
            <person name="Baranano K."/>
            <person name="Ismail F.Y."/>
            <person name="Patel M.S."/>
            <person name="Lehman A."/>
            <person name="Edmondson A.C."/>
            <person name="Nagy A."/>
            <person name="Walker M.A."/>
            <person name="Mercimek-Andrews S."/>
            <person name="Maki Y."/>
            <person name="Sachdev R."/>
            <person name="Macintosh R."/>
            <person name="Palmer E.E."/>
            <person name="Mancini G.M.S."/>
            <person name="Barakat T.S."/>
            <person name="Steinfeld R."/>
            <person name="Ruesch C.T."/>
            <person name="Stettner G.M."/>
            <person name="Wagner M."/>
            <person name="Wortmann S.B."/>
            <person name="Kini U."/>
            <person name="Brady A.F."/>
            <person name="Stals K.L."/>
            <person name="Ismayilova N."/>
            <person name="Ellard S."/>
            <person name="Bernardo D."/>
            <person name="Nugent K."/>
            <person name="McLean S.D."/>
            <person name="Antonarakis S.E."/>
            <person name="Houlden H."/>
            <person name="Kinoshita T."/>
            <person name="Campeau P.M."/>
            <person name="Murakami Y."/>
        </authorList>
    </citation>
    <scope>VARIANTS NEDHSCA MET-124; SER-138; ASP-270; ARG-271; ARG-278; 304-ARG--SER-983 DEL; LEU-344; LEU-497; 505-TRP--SER-983 DEL; MET-531; TRP-681; ASP-696; PRO-851; 934-TYR--SER-983 DEL AND 957-TYR--SER-983 DEL</scope>
    <scope>CHARACTERIZATION OF VARIANTS NEDHSCA TRP-681 AND ASP-696</scope>
    <scope>FUNCTION</scope>
</reference>
<reference key="11">
    <citation type="journal article" date="2021" name="Sci. Rep.">
        <title>PIGG defines the Emm blood group system.</title>
        <authorList>
            <person name="Lane W.J."/>
            <person name="Aeschlimann J."/>
            <person name="Vege S."/>
            <person name="Lomas-Francis C."/>
            <person name="Burgos A."/>
            <person name="Mah H.H."/>
            <person name="Halls J.B.L."/>
            <person name="Baeck P."/>
            <person name="Ligthart P.C."/>
            <person name="Veldhuisen B."/>
            <person name="Shah R.J."/>
            <person name="Joshi S.R."/>
            <person name="Westhoff C.M."/>
        </authorList>
    </citation>
    <scope>POLYMORPHISM</scope>
    <scope>INVOLVEMENT IN EMM-NUL PHENOTYPE</scope>
</reference>
<gene>
    <name evidence="16" type="primary">PIGG</name>
    <name evidence="13" type="synonym">GPI7</name>
    <name type="ORF">UNQ1930/PRO4405</name>
</gene>
<evidence type="ECO:0000255" key="1"/>
<evidence type="ECO:0000269" key="2">
    <source>
    </source>
</evidence>
<evidence type="ECO:0000269" key="3">
    <source>
    </source>
</evidence>
<evidence type="ECO:0000269" key="4">
    <source>
    </source>
</evidence>
<evidence type="ECO:0000269" key="5">
    <source>
    </source>
</evidence>
<evidence type="ECO:0000269" key="6">
    <source>
    </source>
</evidence>
<evidence type="ECO:0000269" key="7">
    <source>
    </source>
</evidence>
<evidence type="ECO:0000269" key="8">
    <source>
    </source>
</evidence>
<evidence type="ECO:0000269" key="9">
    <source>
    </source>
</evidence>
<evidence type="ECO:0000303" key="10">
    <source>
    </source>
</evidence>
<evidence type="ECO:0000303" key="11">
    <source>
    </source>
</evidence>
<evidence type="ECO:0000303" key="12">
    <source>
    </source>
</evidence>
<evidence type="ECO:0000303" key="13">
    <source>
    </source>
</evidence>
<evidence type="ECO:0000303" key="14">
    <source>
    </source>
</evidence>
<evidence type="ECO:0000305" key="15"/>
<evidence type="ECO:0000312" key="16">
    <source>
        <dbReference type="HGNC" id="HGNC:25985"/>
    </source>
</evidence>
<name>PIGG_HUMAN</name>
<accession>Q5H8A4</accession>
<accession>B4DKC7</accession>
<accession>Q2TAK5</accession>
<accession>Q6UX31</accession>
<accession>Q7L5Y4</accession>
<accession>Q8N866</accession>
<accession>Q8NCC9</accession>
<accession>Q96SY9</accession>
<accession>Q9BVT7</accession>
<accession>Q9NXG5</accession>
<protein>
    <recommendedName>
        <fullName>GPI ethanolamine phosphate transferase 2, catalytic subunit</fullName>
        <ecNumber evidence="4 5">2.-.-.-</ecNumber>
    </recommendedName>
    <alternativeName>
        <fullName>GPI7 homolog</fullName>
        <shortName evidence="13">hGPI7</shortName>
    </alternativeName>
    <alternativeName>
        <fullName>Phosphatidylinositol-glycan biosynthesis class G protein</fullName>
        <shortName>PIG-G</shortName>
    </alternativeName>
</protein>
<organism>
    <name type="scientific">Homo sapiens</name>
    <name type="common">Human</name>
    <dbReference type="NCBI Taxonomy" id="9606"/>
    <lineage>
        <taxon>Eukaryota</taxon>
        <taxon>Metazoa</taxon>
        <taxon>Chordata</taxon>
        <taxon>Craniata</taxon>
        <taxon>Vertebrata</taxon>
        <taxon>Euteleostomi</taxon>
        <taxon>Mammalia</taxon>
        <taxon>Eutheria</taxon>
        <taxon>Euarchontoglires</taxon>
        <taxon>Primates</taxon>
        <taxon>Haplorrhini</taxon>
        <taxon>Catarrhini</taxon>
        <taxon>Hominidae</taxon>
        <taxon>Homo</taxon>
    </lineage>
</organism>
<feature type="chain" id="PRO_0000246185" description="GPI ethanolamine phosphate transferase 2, catalytic subunit">
    <location>
        <begin position="1"/>
        <end position="983"/>
    </location>
</feature>
<feature type="topological domain" description="Lumenal" evidence="1">
    <location>
        <begin position="1"/>
        <end position="431"/>
    </location>
</feature>
<feature type="transmembrane region" description="Helical" evidence="1">
    <location>
        <begin position="432"/>
        <end position="452"/>
    </location>
</feature>
<feature type="transmembrane region" description="Helical" evidence="1">
    <location>
        <begin position="471"/>
        <end position="491"/>
    </location>
</feature>
<feature type="transmembrane region" description="Helical" evidence="1">
    <location>
        <begin position="506"/>
        <end position="526"/>
    </location>
</feature>
<feature type="transmembrane region" description="Helical" evidence="1">
    <location>
        <begin position="552"/>
        <end position="572"/>
    </location>
</feature>
<feature type="transmembrane region" description="Helical" evidence="1">
    <location>
        <begin position="699"/>
        <end position="719"/>
    </location>
</feature>
<feature type="transmembrane region" description="Helical" evidence="1">
    <location>
        <begin position="721"/>
        <end position="741"/>
    </location>
</feature>
<feature type="transmembrane region" description="Helical" evidence="1">
    <location>
        <begin position="752"/>
        <end position="772"/>
    </location>
</feature>
<feature type="transmembrane region" description="Helical" evidence="1">
    <location>
        <begin position="789"/>
        <end position="809"/>
    </location>
</feature>
<feature type="transmembrane region" description="Helical" evidence="1">
    <location>
        <begin position="812"/>
        <end position="832"/>
    </location>
</feature>
<feature type="transmembrane region" description="Helical" evidence="1">
    <location>
        <begin position="879"/>
        <end position="899"/>
    </location>
</feature>
<feature type="transmembrane region" description="Helical" evidence="1">
    <location>
        <begin position="919"/>
        <end position="939"/>
    </location>
</feature>
<feature type="transmembrane region" description="Helical" evidence="1">
    <location>
        <begin position="955"/>
        <end position="975"/>
    </location>
</feature>
<feature type="glycosylation site" description="N-linked (GlcNAc...) asparagine" evidence="1">
    <location>
        <position position="194"/>
    </location>
</feature>
<feature type="splice variant" id="VSP_054387" description="In isoform 6." evidence="11">
    <location>
        <begin position="1"/>
        <end position="122"/>
    </location>
</feature>
<feature type="splice variant" id="VSP_019827" description="In isoform 5." evidence="11">
    <location>
        <begin position="1"/>
        <end position="89"/>
    </location>
</feature>
<feature type="splice variant" id="VSP_019828" description="In isoform 3." evidence="12">
    <location>
        <begin position="120"/>
        <end position="252"/>
    </location>
</feature>
<feature type="splice variant" id="VSP_019829" description="In isoform 5." evidence="11">
    <original>DPGFEQFKMSERLHGNW</original>
    <variation>GSHPAPAQRPTGTAQKG</variation>
    <location>
        <begin position="372"/>
        <end position="388"/>
    </location>
</feature>
<feature type="splice variant" id="VSP_019830" description="In isoform 5." evidence="11">
    <location>
        <begin position="389"/>
        <end position="983"/>
    </location>
</feature>
<feature type="splice variant" id="VSP_019831" description="In isoform 4." evidence="10">
    <original>YDIYSMMVGTVVVLEVLTLLLLSVPQALRRKAEL</original>
    <variation>FSPCSCSASHRHCTERLSWKSHCHLLGFLCSFIW</variation>
    <location>
        <begin position="430"/>
        <end position="463"/>
    </location>
</feature>
<feature type="splice variant" id="VSP_054388" description="In isoform 6." evidence="11">
    <original>YDIYSMMVGTVVVLEVLTLLLLSVPQALRRKAEL</original>
    <variation>FSPCSCSASHRHCAERLSWKSHCHLLGFLCSFIW</variation>
    <location>
        <begin position="430"/>
        <end position="463"/>
    </location>
</feature>
<feature type="splice variant" id="VSP_019832" description="In isoform 2." evidence="14">
    <location>
        <begin position="437"/>
        <end position="444"/>
    </location>
</feature>
<feature type="splice variant" id="VSP_019833" description="In isoform 4 and isoform 6." evidence="10 11">
    <location>
        <begin position="464"/>
        <end position="983"/>
    </location>
</feature>
<feature type="sequence variant" id="VAR_057680" description="In dbSNP:rs34120878.">
    <original>S</original>
    <variation>Y</variation>
    <location>
        <position position="55"/>
    </location>
</feature>
<feature type="sequence variant" id="VAR_087224" description="In NEDHSCA; uncertain significance; dbSNP:rs370385328." evidence="8">
    <original>T</original>
    <variation>M</variation>
    <location>
        <position position="124"/>
    </location>
</feature>
<feature type="sequence variant" id="VAR_087225" description="In NEDHSCA; dbSNP:rs148712954." evidence="8">
    <original>N</original>
    <variation>S</variation>
    <location>
        <position position="138"/>
    </location>
</feature>
<feature type="sequence variant" id="VAR_087226" description="In NEDHSCA; unable to rescue surface expression of Emm in PIGG-null cells; dbSNP:rs2108801356." evidence="7">
    <original>H</original>
    <variation>Y</variation>
    <location>
        <position position="214"/>
    </location>
</feature>
<feature type="sequence variant" id="VAR_087227" description="In NEDHSCA." evidence="8">
    <original>G</original>
    <variation>D</variation>
    <location>
        <position position="270"/>
    </location>
</feature>
<feature type="sequence variant" id="VAR_087228" description="In NEDHSCA; dbSNP:rs1406989563." evidence="8">
    <original>M</original>
    <variation>R</variation>
    <location>
        <position position="271"/>
    </location>
</feature>
<feature type="sequence variant" id="VAR_087229" description="In NEDHSCA; dbSNP:rs552500897." evidence="8">
    <original>G</original>
    <variation>R</variation>
    <location>
        <position position="278"/>
    </location>
</feature>
<feature type="sequence variant" id="VAR_087230" description="In NEDHSCA." evidence="8">
    <location>
        <begin position="304"/>
        <end position="983"/>
    </location>
</feature>
<feature type="sequence variant" id="VAR_087231" description="In NEDHSCA; loss of ethanolamine phosphate transferase activity as evidenced by abnormal accumulation of the GPI precursors H7 and H7' and absence of mature GPI precursor H8 in patient lymphoblasts." evidence="5">
    <location>
        <begin position="310"/>
        <end position="983"/>
    </location>
</feature>
<feature type="sequence variant" id="VAR_087232" description="In NEDHSCA; uncertain significance; dbSNP:rs757141700." evidence="8">
    <original>M</original>
    <variation>L</variation>
    <location>
        <position position="344"/>
    </location>
</feature>
<feature type="sequence variant" id="VAR_027022" description="In dbSNP:rs13115344." evidence="3">
    <original>R</original>
    <variation>H</variation>
    <location>
        <position position="458"/>
    </location>
</feature>
<feature type="sequence variant" id="VAR_087233" description="In NEDHSCA; uncertain significance; dbSNP:rs755547556." evidence="8">
    <original>S</original>
    <variation>L</variation>
    <location>
        <position position="497"/>
    </location>
</feature>
<feature type="sequence variant" id="VAR_087234" description="In NEDHSCA." evidence="8">
    <location>
        <begin position="505"/>
        <end position="983"/>
    </location>
</feature>
<feature type="sequence variant" id="VAR_087235" description="In NEDHSCA; uncertain significance; dbSNP:rs143362968." evidence="8">
    <original>V</original>
    <variation>M</variation>
    <location>
        <position position="531"/>
    </location>
</feature>
<feature type="sequence variant" id="VAR_087236" description="In NEDHSCA; decreased protein abundance." evidence="6">
    <location>
        <begin position="547"/>
        <end position="983"/>
    </location>
</feature>
<feature type="sequence variant" id="VAR_027023" description="In dbSNP:rs7666425." evidence="3">
    <original>C</original>
    <variation>R</variation>
    <location>
        <position position="610"/>
    </location>
</feature>
<feature type="sequence variant" id="VAR_076775" description="In NEDHSCA; almost complete loss of ethanolamine phosphate transferase activity as evidenced by abnormal accumulation of the GPI precursors H7 and H7' and absence of mature GPI precursor H8 in patient lymphoblasts; does not affect protein expression levels in transfected HEK293 cells; dbSNP:rs372392424." evidence="5">
    <original>R</original>
    <variation>C</variation>
    <location>
        <position position="669"/>
    </location>
</feature>
<feature type="sequence variant" id="VAR_087237" description="In NEDHSCA; uncertain significance; shows a mild decrease in phosphotransferase activity; dbSNP:rs899791968." evidence="8">
    <original>R</original>
    <variation>W</variation>
    <location>
        <position position="681"/>
    </location>
</feature>
<feature type="sequence variant" id="VAR_087238" description="In NEDHSCA; uncertain significance; shows a mild decrease in phosphotransferase activity; dbSNP:rs1203666288." evidence="8">
    <original>E</original>
    <variation>D</variation>
    <location>
        <position position="696"/>
    </location>
</feature>
<feature type="sequence variant" id="VAR_027024" description="In dbSNP:rs13114026." evidence="2 3">
    <original>V</original>
    <variation>I</variation>
    <location>
        <position position="699"/>
    </location>
</feature>
<feature type="sequence variant" id="VAR_060086" description="In dbSNP:rs34916638.">
    <original>V</original>
    <variation>I</variation>
    <location>
        <position position="731"/>
    </location>
</feature>
<feature type="sequence variant" id="VAR_087239" description="In NEDHSCA; dbSNP:rs150802299." evidence="8">
    <original>Q</original>
    <variation>P</variation>
    <location>
        <position position="851"/>
    </location>
</feature>
<feature type="sequence variant" id="VAR_060087" description="In dbSNP:rs34623004.">
    <original>I</original>
    <variation>T</variation>
    <location>
        <position position="881"/>
    </location>
</feature>
<feature type="sequence variant" id="VAR_027025" description="In dbSNP:rs1127410.">
    <original>F</original>
    <variation>S</variation>
    <location>
        <position position="932"/>
    </location>
</feature>
<feature type="sequence variant" id="VAR_087240" description="In NEDHSCA." evidence="8">
    <location>
        <begin position="934"/>
        <end position="983"/>
    </location>
</feature>
<feature type="sequence variant" id="VAR_087241" description="In NEDHSCA." evidence="8">
    <location>
        <begin position="957"/>
        <end position="983"/>
    </location>
</feature>
<feature type="sequence conflict" description="In Ref. 3; BAC11227." evidence="15" ref="3">
    <original>D</original>
    <variation>G</variation>
    <location>
        <position position="624"/>
    </location>
</feature>
<feature type="sequence conflict" description="In Ref. 3; BAC11227." evidence="15" ref="3">
    <original>F</original>
    <variation>L</variation>
    <location>
        <position position="889"/>
    </location>
</feature>
<proteinExistence type="evidence at protein level"/>
<comment type="function">
    <text evidence="4 5 7 8">Catalytic subunit of the ethanolamine phosphate transferase 2 complex that transfers an ethanolamine phosphate (EtNP) from a phosphatidylethanolamine (PE) to the 6-OH position of the second alpha-1,6-linked mannose of a 6-PEtn-alpha-D-Man-(1-&gt;2)-alpha-D-Man-(1-&gt;6)-2-PEtn-alpha-D-Man-(1-&gt;4)-alpha-D-GlcN-(1-&gt;6)-(1-radyl,2-acyl-sn-glycero-3-phospho)-2-acyl-inositol (also termed H7) intermediate to generate a 6-PEtn-alpha-D-Man-(1-&gt;2)-6-PEtn-alpha-D-Man-(1-&gt;6)-2-PEtn-alpha-D-Man-(1-&gt;4)-alpha-D-GlcN-(1-&gt;6)-(1-radyl,2-acyl-sn-glycero-3-phospho)-2-acyl-inositol (also termed H8) and participates in the eleventh step of the glycosylphosphatidylinositol-anchor biosynthesis.</text>
</comment>
<comment type="pathway">
    <text evidence="4 5">Glycolipid biosynthesis; glycosylphosphatidylinositol-anchor biosynthesis.</text>
</comment>
<comment type="subunit">
    <text evidence="4">Part of the ethanolamine phosphate transferase 2 complex composed by PIGG and PIGF (PubMed:15632136). PIGF is required to stabilize it (PubMed:15632136). Competes with PIGO for the binding of PIGF (PubMed:15632136).</text>
</comment>
<comment type="subcellular location">
    <subcellularLocation>
        <location evidence="4">Endoplasmic reticulum membrane</location>
        <topology evidence="1">Multi-pass membrane protein</topology>
    </subcellularLocation>
</comment>
<comment type="alternative products">
    <event type="alternative splicing"/>
    <isoform>
        <id>Q5H8A4-1</id>
        <name>1</name>
        <sequence type="displayed"/>
    </isoform>
    <isoform>
        <id>Q5H8A4-2</id>
        <name>2</name>
        <sequence type="described" ref="VSP_019832"/>
    </isoform>
    <isoform>
        <id>Q5H8A4-3</id>
        <name>3</name>
        <sequence type="described" ref="VSP_019828"/>
    </isoform>
    <isoform>
        <id>Q5H8A4-4</id>
        <name>4</name>
        <sequence type="described" ref="VSP_019831 VSP_019833"/>
    </isoform>
    <isoform>
        <id>Q5H8A4-5</id>
        <name>5</name>
        <sequence type="described" ref="VSP_019827 VSP_019829 VSP_019830"/>
    </isoform>
    <isoform>
        <id>Q5H8A4-6</id>
        <name>6</name>
        <sequence type="described" ref="VSP_054387 VSP_054388 VSP_019833"/>
    </isoform>
</comment>
<comment type="polymorphism">
    <text evidence="7 9">Genetic variations in PIGG define the Emm blood group system [MIM:619812].</text>
</comment>
<comment type="disease" evidence="5 6 7 8">
    <disease id="DI-04693">
        <name>Neurodevelopmental disorder with or without hypotonia, seizures, and cerebellar atrophy</name>
        <acronym>NEDHSCA</acronym>
        <description>An autosomal recessive disorder characterized by delayed psychomotor development, hypotonia, and early-onset seizures in most patients. Additional variable features are cerebellar atrophy, ataxia, and non-specific dysmorphic features. Some patients may have the Emm-null blood group phenotype.</description>
        <dbReference type="MIM" id="616917"/>
    </disease>
    <text>The disease is caused by variants affecting the gene represented in this entry.</text>
</comment>
<comment type="miscellaneous">
    <molecule>Isoform 4</molecule>
    <text evidence="15">May be produced at very low levels due to a premature stop codon in the mRNA, leading to nonsense-mediated mRNA decay.</text>
</comment>
<comment type="similarity">
    <text evidence="15">Belongs to the PIGG/PIGN/PIGO family. PIGG subfamily.</text>
</comment>
<comment type="sequence caution" evidence="15">
    <conflict type="erroneous termination">
        <sequence resource="EMBL-CDS" id="AAQ88902"/>
    </conflict>
    <text>Truncated C-terminus.</text>
</comment>
<comment type="sequence caution" evidence="15">
    <conflict type="erroneous initiation">
        <sequence resource="EMBL-CDS" id="BAA91046"/>
    </conflict>
    <text>Truncated N-terminus.</text>
</comment>
<comment type="sequence caution" evidence="15">
    <conflict type="erroneous initiation">
        <sequence resource="EMBL-CDS" id="BAB55130"/>
    </conflict>
    <text>Truncated N-terminus.</text>
</comment>
<dbReference type="EC" id="2.-.-.-" evidence="4 5"/>
<dbReference type="EMBL" id="AB162713">
    <property type="protein sequence ID" value="BAD89023.1"/>
    <property type="molecule type" value="mRNA"/>
</dbReference>
<dbReference type="EMBL" id="AY358538">
    <property type="protein sequence ID" value="AAQ88902.1"/>
    <property type="status" value="ALT_SEQ"/>
    <property type="molecule type" value="mRNA"/>
</dbReference>
<dbReference type="EMBL" id="AK074815">
    <property type="protein sequence ID" value="BAC11227.1"/>
    <property type="molecule type" value="mRNA"/>
</dbReference>
<dbReference type="EMBL" id="AK000272">
    <property type="protein sequence ID" value="BAA91046.1"/>
    <property type="status" value="ALT_INIT"/>
    <property type="molecule type" value="mRNA"/>
</dbReference>
<dbReference type="EMBL" id="AK027465">
    <property type="protein sequence ID" value="BAB55130.1"/>
    <property type="status" value="ALT_INIT"/>
    <property type="molecule type" value="mRNA"/>
</dbReference>
<dbReference type="EMBL" id="AK097244">
    <property type="protein sequence ID" value="BAC04984.1"/>
    <property type="molecule type" value="mRNA"/>
</dbReference>
<dbReference type="EMBL" id="AK296507">
    <property type="protein sequence ID" value="BAG59139.1"/>
    <property type="molecule type" value="mRNA"/>
</dbReference>
<dbReference type="EMBL" id="AC092574">
    <property type="status" value="NOT_ANNOTATED_CDS"/>
    <property type="molecule type" value="Genomic_DNA"/>
</dbReference>
<dbReference type="EMBL" id="AC116565">
    <property type="status" value="NOT_ANNOTATED_CDS"/>
    <property type="molecule type" value="Genomic_DNA"/>
</dbReference>
<dbReference type="EMBL" id="BC000937">
    <property type="protein sequence ID" value="AAH00937.2"/>
    <property type="molecule type" value="mRNA"/>
</dbReference>
<dbReference type="EMBL" id="BC001249">
    <property type="protein sequence ID" value="AAH01249.2"/>
    <property type="molecule type" value="mRNA"/>
</dbReference>
<dbReference type="EMBL" id="BC110878">
    <property type="protein sequence ID" value="AAI10879.1"/>
    <property type="molecule type" value="mRNA"/>
</dbReference>
<dbReference type="CCDS" id="CCDS3336.1">
    <molecule id="Q5H8A4-2"/>
</dbReference>
<dbReference type="CCDS" id="CCDS46992.1">
    <molecule id="Q5H8A4-1"/>
</dbReference>
<dbReference type="CCDS" id="CCDS75080.1">
    <molecule id="Q5H8A4-3"/>
</dbReference>
<dbReference type="CCDS" id="CCDS75083.1">
    <molecule id="Q5H8A4-5"/>
</dbReference>
<dbReference type="RefSeq" id="NP_001120650.1">
    <molecule id="Q5H8A4-1"/>
    <property type="nucleotide sequence ID" value="NM_001127178.3"/>
</dbReference>
<dbReference type="RefSeq" id="NP_001275980.1">
    <property type="nucleotide sequence ID" value="NM_001289051.1"/>
</dbReference>
<dbReference type="RefSeq" id="NP_001275981.1">
    <molecule id="Q5H8A4-3"/>
    <property type="nucleotide sequence ID" value="NM_001289052.2"/>
</dbReference>
<dbReference type="RefSeq" id="NP_001275984.1">
    <molecule id="Q5H8A4-6"/>
    <property type="nucleotide sequence ID" value="NM_001289055.2"/>
</dbReference>
<dbReference type="RefSeq" id="NP_001275986.1">
    <molecule id="Q5H8A4-5"/>
    <property type="nucleotide sequence ID" value="NM_001289057.2"/>
</dbReference>
<dbReference type="RefSeq" id="NP_060203.3">
    <molecule id="Q5H8A4-2"/>
    <property type="nucleotide sequence ID" value="NM_017733.4"/>
</dbReference>
<dbReference type="SMR" id="Q5H8A4"/>
<dbReference type="BioGRID" id="120220">
    <property type="interactions" value="120"/>
</dbReference>
<dbReference type="ComplexPortal" id="CPX-2677">
    <property type="entry name" value="Glycosylphosphatidylinsitol ethanolamine-phosphate transferase II complex"/>
</dbReference>
<dbReference type="FunCoup" id="Q5H8A4">
    <property type="interactions" value="2118"/>
</dbReference>
<dbReference type="IntAct" id="Q5H8A4">
    <property type="interactions" value="49"/>
</dbReference>
<dbReference type="MINT" id="Q5H8A4"/>
<dbReference type="STRING" id="9606.ENSP00000415203"/>
<dbReference type="GlyCosmos" id="Q5H8A4">
    <property type="glycosylation" value="1 site, No reported glycans"/>
</dbReference>
<dbReference type="GlyGen" id="Q5H8A4">
    <property type="glycosylation" value="3 sites, 2 N-linked glycans (2 sites), 1 O-linked glycan (1 site)"/>
</dbReference>
<dbReference type="iPTMnet" id="Q5H8A4"/>
<dbReference type="PhosphoSitePlus" id="Q5H8A4"/>
<dbReference type="SwissPalm" id="Q5H8A4"/>
<dbReference type="BioMuta" id="PIGG"/>
<dbReference type="DMDM" id="74707851"/>
<dbReference type="jPOST" id="Q5H8A4"/>
<dbReference type="MassIVE" id="Q5H8A4"/>
<dbReference type="PaxDb" id="9606-ENSP00000415203"/>
<dbReference type="PeptideAtlas" id="Q5H8A4"/>
<dbReference type="ProteomicsDB" id="4448"/>
<dbReference type="ProteomicsDB" id="62844">
    <molecule id="Q5H8A4-1"/>
</dbReference>
<dbReference type="ProteomicsDB" id="62845">
    <molecule id="Q5H8A4-2"/>
</dbReference>
<dbReference type="ProteomicsDB" id="62846">
    <molecule id="Q5H8A4-3"/>
</dbReference>
<dbReference type="ProteomicsDB" id="62847">
    <molecule id="Q5H8A4-4"/>
</dbReference>
<dbReference type="ProteomicsDB" id="62848">
    <molecule id="Q5H8A4-5"/>
</dbReference>
<dbReference type="Pumba" id="Q5H8A4"/>
<dbReference type="Antibodypedia" id="3105">
    <property type="antibodies" value="10 antibodies from 9 providers"/>
</dbReference>
<dbReference type="DNASU" id="54872"/>
<dbReference type="Ensembl" id="ENST00000310340.9">
    <molecule id="Q5H8A4-2"/>
    <property type="protein sequence ID" value="ENSP00000311750.5"/>
    <property type="gene ID" value="ENSG00000174227.16"/>
</dbReference>
<dbReference type="Ensembl" id="ENST00000383028.8">
    <molecule id="Q5H8A4-3"/>
    <property type="protein sequence ID" value="ENSP00000372494.4"/>
    <property type="gene ID" value="ENSG00000174227.16"/>
</dbReference>
<dbReference type="Ensembl" id="ENST00000453061.7">
    <molecule id="Q5H8A4-1"/>
    <property type="protein sequence ID" value="ENSP00000415203.2"/>
    <property type="gene ID" value="ENSG00000174227.16"/>
</dbReference>
<dbReference type="Ensembl" id="ENST00000503111.5">
    <molecule id="Q5H8A4-5"/>
    <property type="protein sequence ID" value="ENSP00000426002.1"/>
    <property type="gene ID" value="ENSG00000174227.16"/>
</dbReference>
<dbReference type="GeneID" id="54872"/>
<dbReference type="KEGG" id="hsa:54872"/>
<dbReference type="MANE-Select" id="ENST00000453061.7">
    <property type="protein sequence ID" value="ENSP00000415203.2"/>
    <property type="RefSeq nucleotide sequence ID" value="NM_001127178.3"/>
    <property type="RefSeq protein sequence ID" value="NP_001120650.1"/>
</dbReference>
<dbReference type="UCSC" id="uc003gaj.6">
    <molecule id="Q5H8A4-1"/>
    <property type="organism name" value="human"/>
</dbReference>
<dbReference type="AGR" id="HGNC:25985"/>
<dbReference type="CTD" id="54872"/>
<dbReference type="DisGeNET" id="54872"/>
<dbReference type="GeneCards" id="PIGG"/>
<dbReference type="HGNC" id="HGNC:25985">
    <property type="gene designation" value="PIGG"/>
</dbReference>
<dbReference type="HPA" id="ENSG00000174227">
    <property type="expression patterns" value="Low tissue specificity"/>
</dbReference>
<dbReference type="MalaCards" id="PIGG"/>
<dbReference type="MIM" id="616917">
    <property type="type" value="phenotype"/>
</dbReference>
<dbReference type="MIM" id="616918">
    <property type="type" value="gene"/>
</dbReference>
<dbReference type="MIM" id="619812">
    <property type="type" value="phenotype"/>
</dbReference>
<dbReference type="neXtProt" id="NX_Q5H8A4"/>
<dbReference type="OpenTargets" id="ENSG00000174227"/>
<dbReference type="Orphanet" id="488635">
    <property type="disease" value="Early-onset epilepsy-intellectual disability-brain anomalies syndrome"/>
</dbReference>
<dbReference type="Orphanet" id="280">
    <property type="disease" value="Wolf-Hirschhorn syndrome"/>
</dbReference>
<dbReference type="PharmGKB" id="PA143485575"/>
<dbReference type="VEuPathDB" id="HostDB:ENSG00000174227"/>
<dbReference type="eggNOG" id="KOG2125">
    <property type="taxonomic scope" value="Eukaryota"/>
</dbReference>
<dbReference type="GeneTree" id="ENSGT00910000144269"/>
<dbReference type="HOGENOM" id="CLU_055386_0_0_1"/>
<dbReference type="InParanoid" id="Q5H8A4"/>
<dbReference type="OMA" id="RVKFGHD"/>
<dbReference type="OrthoDB" id="272139at2759"/>
<dbReference type="PAN-GO" id="Q5H8A4">
    <property type="GO annotations" value="3 GO annotations based on evolutionary models"/>
</dbReference>
<dbReference type="PhylomeDB" id="Q5H8A4"/>
<dbReference type="TreeFam" id="TF300609"/>
<dbReference type="PathwayCommons" id="Q5H8A4"/>
<dbReference type="Reactome" id="R-HSA-162710">
    <property type="pathway name" value="Synthesis of glycosylphosphatidylinositol (GPI)"/>
</dbReference>
<dbReference type="SignaLink" id="Q5H8A4"/>
<dbReference type="SIGNOR" id="Q5H8A4"/>
<dbReference type="UniPathway" id="UPA00196"/>
<dbReference type="BioGRID-ORCS" id="54872">
    <property type="hits" value="11 hits in 1156 CRISPR screens"/>
</dbReference>
<dbReference type="ChiTaRS" id="PIGG">
    <property type="organism name" value="human"/>
</dbReference>
<dbReference type="GenomeRNAi" id="54872"/>
<dbReference type="Pharos" id="Q5H8A4">
    <property type="development level" value="Tbio"/>
</dbReference>
<dbReference type="PRO" id="PR:Q5H8A4"/>
<dbReference type="Proteomes" id="UP000005640">
    <property type="component" value="Chromosome 4"/>
</dbReference>
<dbReference type="RNAct" id="Q5H8A4">
    <property type="molecule type" value="protein"/>
</dbReference>
<dbReference type="Bgee" id="ENSG00000174227">
    <property type="expression patterns" value="Expressed in right uterine tube and 186 other cell types or tissues"/>
</dbReference>
<dbReference type="ExpressionAtlas" id="Q5H8A4">
    <property type="expression patterns" value="baseline and differential"/>
</dbReference>
<dbReference type="GO" id="GO:0005783">
    <property type="term" value="C:endoplasmic reticulum"/>
    <property type="evidence" value="ECO:0000314"/>
    <property type="project" value="MGI"/>
</dbReference>
<dbReference type="GO" id="GO:0005789">
    <property type="term" value="C:endoplasmic reticulum membrane"/>
    <property type="evidence" value="ECO:0000318"/>
    <property type="project" value="GO_Central"/>
</dbReference>
<dbReference type="GO" id="GO:0016020">
    <property type="term" value="C:membrane"/>
    <property type="evidence" value="ECO:0007005"/>
    <property type="project" value="UniProtKB"/>
</dbReference>
<dbReference type="GO" id="GO:0051267">
    <property type="term" value="F:CP2 mannose-ethanolamine phosphotransferase activity"/>
    <property type="evidence" value="ECO:0000314"/>
    <property type="project" value="MGI"/>
</dbReference>
<dbReference type="GO" id="GO:0016780">
    <property type="term" value="F:phosphotransferase activity, for other substituted phosphate groups"/>
    <property type="evidence" value="ECO:0000304"/>
    <property type="project" value="Reactome"/>
</dbReference>
<dbReference type="GO" id="GO:0016740">
    <property type="term" value="F:transferase activity"/>
    <property type="evidence" value="ECO:0000315"/>
    <property type="project" value="UniProtKB"/>
</dbReference>
<dbReference type="GO" id="GO:0006506">
    <property type="term" value="P:GPI anchor biosynthetic process"/>
    <property type="evidence" value="ECO:0000314"/>
    <property type="project" value="MGI"/>
</dbReference>
<dbReference type="CDD" id="cd16024">
    <property type="entry name" value="GPI_EPT_2"/>
    <property type="match status" value="1"/>
</dbReference>
<dbReference type="FunFam" id="3.40.720.10:FF:000018">
    <property type="entry name" value="Putative GPI ethanolamine phosphate transferase 2"/>
    <property type="match status" value="1"/>
</dbReference>
<dbReference type="Gene3D" id="3.40.720.10">
    <property type="entry name" value="Alkaline Phosphatase, subunit A"/>
    <property type="match status" value="1"/>
</dbReference>
<dbReference type="InterPro" id="IPR017850">
    <property type="entry name" value="Alkaline_phosphatase_core_sf"/>
</dbReference>
<dbReference type="InterPro" id="IPR002591">
    <property type="entry name" value="Phosphodiest/P_Trfase"/>
</dbReference>
<dbReference type="InterPro" id="IPR037674">
    <property type="entry name" value="PIG-G_N"/>
</dbReference>
<dbReference type="InterPro" id="IPR039527">
    <property type="entry name" value="PIGG/GPI7"/>
</dbReference>
<dbReference type="InterPro" id="IPR045687">
    <property type="entry name" value="PIGG/GPI7_C"/>
</dbReference>
<dbReference type="PANTHER" id="PTHR23072:SF0">
    <property type="entry name" value="GPI ETHANOLAMINE PHOSPHATE TRANSFERASE 2"/>
    <property type="match status" value="1"/>
</dbReference>
<dbReference type="PANTHER" id="PTHR23072">
    <property type="entry name" value="PHOSPHATIDYLINOSITOL GLYCAN-RELATED"/>
    <property type="match status" value="1"/>
</dbReference>
<dbReference type="Pfam" id="PF01663">
    <property type="entry name" value="Phosphodiest"/>
    <property type="match status" value="1"/>
</dbReference>
<dbReference type="Pfam" id="PF19316">
    <property type="entry name" value="PIGO_PIGG"/>
    <property type="match status" value="1"/>
</dbReference>
<dbReference type="SUPFAM" id="SSF53649">
    <property type="entry name" value="Alkaline phosphatase-like"/>
    <property type="match status" value="1"/>
</dbReference>
<sequence>MRLGSGTFATCCVAIEVLGIAVFLRGFFPAPVRSSARAEHGAEPPAPEPSAGASSNWTTLPPPLFSKVVIVLIDALRDDFVFGSKGVKFMPYTTYLVEKGASHSFVAEAKPPTVTMPRIKALMTGSLPGFVDVIRNLNSPALLEDSVIRQAKAAGKRIVFYGDETWVKLFPKHFVEYDGTTSFFVSDYTEVDNNVTRHLDKVLKRGDWDILILHYLGLDHIGHISGPNSPLIGQKLSEMDSVLMKIHTSLQSKERETPLPNLLVLCGDHGMSETGSHGASSTEEVNTPLILISSAFERKPGDIRHPKHVQQTDVAATLAIALGLPIPKDSVGSLLFPVVEGRPMREQLRFLHLNTVQLSKLLQENVPSYEKDPGFEQFKMSERLHGNWIRLYLEEKHSEVLFNLGSKVLRQYLDALKTLSLSLSAQVAQYDIYSMMVGTVVVLEVLTLLLLSVPQALRRKAELEVPLSSPGFSLLFYLVILVLSAVHVIVCTSAESSCYFCGLSWLAAGGVMVLASALLCVIVSVLTNVLVGGNTPRKNPMHPSSRWSELDLLILLGTAGHVLSLGASSFVEEEHQTWYFLVNTLCLALSQETYRNYFLGDDGEPPCGLCVEQGHDGATAAWQDGPGCDVLERDKGHGSPSTSEVLRGREKWMVLASPWLILACCRLLRSLNQTGVQWAHRPDLGHWLTSSDHKAELSVLAALSLLVVFVLVQRGCSPVSKAALALGLLGVYCYRAAIGSVRFPWRPDSKDISKGIIEARFVYVFVLGILFTGTKDLLKSQVIAADFKLKTVGLWEIYSGLVLLAALLFRPHNLPVLAFSLLIQTLMTKFIWKPLRHDAAEITVMHYWFGQAFFYFQGNSNNIATVDISAGFVGLDTYVEIPAVLLTAFGTYAGPVLWASHLVHFLSSETRSGSALSHACFCYALICSIPVFTYIVLVTSLRYHLFIWSVFSPKLLYEGMHLLITAAVCVFFTAMDQTRLTQS</sequence>